<feature type="chain" id="PRO_1000081279" description="Small ribosomal subunit protein uS7">
    <location>
        <begin position="1"/>
        <end position="156"/>
    </location>
</feature>
<reference key="1">
    <citation type="submission" date="2007-05" db="EMBL/GenBank/DDBJ databases">
        <title>Complete sequence of Dehalococcoides sp. BAV1.</title>
        <authorList>
            <consortium name="US DOE Joint Genome Institute"/>
            <person name="Copeland A."/>
            <person name="Lucas S."/>
            <person name="Lapidus A."/>
            <person name="Barry K."/>
            <person name="Detter J.C."/>
            <person name="Glavina del Rio T."/>
            <person name="Hammon N."/>
            <person name="Israni S."/>
            <person name="Pitluck S."/>
            <person name="Lowry S."/>
            <person name="Clum A."/>
            <person name="Schmutz J."/>
            <person name="Larimer F."/>
            <person name="Land M."/>
            <person name="Hauser L."/>
            <person name="Kyrpides N."/>
            <person name="Kim E."/>
            <person name="Ritalahti K.M."/>
            <person name="Loeffler F."/>
            <person name="Richardson P."/>
        </authorList>
    </citation>
    <scope>NUCLEOTIDE SEQUENCE [LARGE SCALE GENOMIC DNA]</scope>
    <source>
        <strain>ATCC BAA-2100 / JCM 16839 / KCTC 5957 / BAV1</strain>
    </source>
</reference>
<organism>
    <name type="scientific">Dehalococcoides mccartyi (strain ATCC BAA-2100 / JCM 16839 / KCTC 5957 / BAV1)</name>
    <dbReference type="NCBI Taxonomy" id="216389"/>
    <lineage>
        <taxon>Bacteria</taxon>
        <taxon>Bacillati</taxon>
        <taxon>Chloroflexota</taxon>
        <taxon>Dehalococcoidia</taxon>
        <taxon>Dehalococcoidales</taxon>
        <taxon>Dehalococcoidaceae</taxon>
        <taxon>Dehalococcoides</taxon>
    </lineage>
</organism>
<gene>
    <name evidence="1" type="primary">rpsG</name>
    <name type="ordered locus">DehaBAV1_0448</name>
</gene>
<keyword id="KW-0687">Ribonucleoprotein</keyword>
<keyword id="KW-0689">Ribosomal protein</keyword>
<keyword id="KW-0694">RNA-binding</keyword>
<keyword id="KW-0699">rRNA-binding</keyword>
<keyword id="KW-0820">tRNA-binding</keyword>
<dbReference type="EMBL" id="CP000688">
    <property type="protein sequence ID" value="ABQ17033.1"/>
    <property type="molecule type" value="Genomic_DNA"/>
</dbReference>
<dbReference type="SMR" id="A5FRY6"/>
<dbReference type="KEGG" id="deb:DehaBAV1_0448"/>
<dbReference type="PATRIC" id="fig|216389.18.peg.491"/>
<dbReference type="HOGENOM" id="CLU_072226_1_1_0"/>
<dbReference type="GO" id="GO:0015935">
    <property type="term" value="C:small ribosomal subunit"/>
    <property type="evidence" value="ECO:0007669"/>
    <property type="project" value="InterPro"/>
</dbReference>
<dbReference type="GO" id="GO:0019843">
    <property type="term" value="F:rRNA binding"/>
    <property type="evidence" value="ECO:0007669"/>
    <property type="project" value="UniProtKB-UniRule"/>
</dbReference>
<dbReference type="GO" id="GO:0003735">
    <property type="term" value="F:structural constituent of ribosome"/>
    <property type="evidence" value="ECO:0007669"/>
    <property type="project" value="InterPro"/>
</dbReference>
<dbReference type="GO" id="GO:0000049">
    <property type="term" value="F:tRNA binding"/>
    <property type="evidence" value="ECO:0007669"/>
    <property type="project" value="UniProtKB-UniRule"/>
</dbReference>
<dbReference type="GO" id="GO:0006412">
    <property type="term" value="P:translation"/>
    <property type="evidence" value="ECO:0007669"/>
    <property type="project" value="UniProtKB-UniRule"/>
</dbReference>
<dbReference type="CDD" id="cd14869">
    <property type="entry name" value="uS7_Bacteria"/>
    <property type="match status" value="1"/>
</dbReference>
<dbReference type="FunFam" id="1.10.455.10:FF:000001">
    <property type="entry name" value="30S ribosomal protein S7"/>
    <property type="match status" value="1"/>
</dbReference>
<dbReference type="Gene3D" id="1.10.455.10">
    <property type="entry name" value="Ribosomal protein S7 domain"/>
    <property type="match status" value="1"/>
</dbReference>
<dbReference type="HAMAP" id="MF_00480_B">
    <property type="entry name" value="Ribosomal_uS7_B"/>
    <property type="match status" value="1"/>
</dbReference>
<dbReference type="InterPro" id="IPR000235">
    <property type="entry name" value="Ribosomal_uS7"/>
</dbReference>
<dbReference type="InterPro" id="IPR005717">
    <property type="entry name" value="Ribosomal_uS7_bac/org-type"/>
</dbReference>
<dbReference type="InterPro" id="IPR023798">
    <property type="entry name" value="Ribosomal_uS7_dom"/>
</dbReference>
<dbReference type="InterPro" id="IPR036823">
    <property type="entry name" value="Ribosomal_uS7_dom_sf"/>
</dbReference>
<dbReference type="NCBIfam" id="TIGR01029">
    <property type="entry name" value="rpsG_bact"/>
    <property type="match status" value="1"/>
</dbReference>
<dbReference type="PANTHER" id="PTHR11205">
    <property type="entry name" value="RIBOSOMAL PROTEIN S7"/>
    <property type="match status" value="1"/>
</dbReference>
<dbReference type="Pfam" id="PF00177">
    <property type="entry name" value="Ribosomal_S7"/>
    <property type="match status" value="1"/>
</dbReference>
<dbReference type="PIRSF" id="PIRSF002122">
    <property type="entry name" value="RPS7p_RPS7a_RPS5e_RPS7o"/>
    <property type="match status" value="1"/>
</dbReference>
<dbReference type="SUPFAM" id="SSF47973">
    <property type="entry name" value="Ribosomal protein S7"/>
    <property type="match status" value="1"/>
</dbReference>
<evidence type="ECO:0000255" key="1">
    <source>
        <dbReference type="HAMAP-Rule" id="MF_00480"/>
    </source>
</evidence>
<evidence type="ECO:0000305" key="2"/>
<name>RS7_DEHMB</name>
<comment type="function">
    <text evidence="1">One of the primary rRNA binding proteins, it binds directly to 16S rRNA where it nucleates assembly of the head domain of the 30S subunit. Is located at the subunit interface close to the decoding center, probably blocks exit of the E-site tRNA.</text>
</comment>
<comment type="subunit">
    <text evidence="1">Part of the 30S ribosomal subunit. Contacts proteins S9 and S11.</text>
</comment>
<comment type="similarity">
    <text evidence="1">Belongs to the universal ribosomal protein uS7 family.</text>
</comment>
<proteinExistence type="inferred from homology"/>
<protein>
    <recommendedName>
        <fullName evidence="1">Small ribosomal subunit protein uS7</fullName>
    </recommendedName>
    <alternativeName>
        <fullName evidence="2">30S ribosomal protein S7</fullName>
    </alternativeName>
</protein>
<sequence length="156" mass="17922">MPRRARKFKRAVAPDSRYNSLMLSNFINKLMMHGQKATAQRIVYDAIDIMGKQENKEGLAVFEQGLKNATPFIEVKPRRVGGATYQVPIEVRPDRAQTMAMRWIIKAARKRTGKSMAERLASEMLEASREQGAAVKKREETHKMAEANRAFAHYRW</sequence>
<accession>A5FRY6</accession>